<gene>
    <name type="ordered locus">CT0609</name>
</gene>
<comment type="function">
    <text evidence="2 3 5">Catalyzes the final reductions in tetra-hydrobiopterin biosynthesis to form 5,6,7,8-tetrahydrobiopterin.</text>
</comment>
<comment type="catalytic activity">
    <reaction evidence="2 3">
        <text>L-threo-7,8-dihydrobiopterin + NADP(+) = L-sepiapterin + NADPH + H(+)</text>
        <dbReference type="Rhea" id="RHEA:32619"/>
        <dbReference type="ChEBI" id="CHEBI:15378"/>
        <dbReference type="ChEBI" id="CHEBI:57783"/>
        <dbReference type="ChEBI" id="CHEBI:58349"/>
        <dbReference type="ChEBI" id="CHEBI:64240"/>
        <dbReference type="ChEBI" id="CHEBI:194527"/>
        <dbReference type="EC" id="1.1.1.325"/>
    </reaction>
</comment>
<comment type="catalytic activity">
    <reaction evidence="3">
        <text>L-threo-tetrahydrobiopterin + 2 NADP(+) = 6-pyruvoyl-5,6,7,8-tetrahydropterin + 2 NADPH + 2 H(+)</text>
        <dbReference type="Rhea" id="RHEA:32623"/>
        <dbReference type="ChEBI" id="CHEBI:15378"/>
        <dbReference type="ChEBI" id="CHEBI:57783"/>
        <dbReference type="ChEBI" id="CHEBI:58349"/>
        <dbReference type="ChEBI" id="CHEBI:64241"/>
        <dbReference type="ChEBI" id="CHEBI:136564"/>
        <dbReference type="EC" id="1.1.1.325"/>
    </reaction>
</comment>
<comment type="activity regulation">
    <text evidence="2">Slightly inhibited by N-acetyldopamine but not by N-acetylserotonin or melatonin.</text>
</comment>
<comment type="biophysicochemical properties">
    <kinetics>
        <KM evidence="2 5">21 uM for sepiapterin (at pH 8.8 and 45 degrees Celsius)</KM>
        <KM evidence="2 5">0.18 uM for sepiapterin (at pH 6.5 and 37 degrees Celsius)</KM>
        <KM evidence="2 5">6.2 uM for NADPH (at pH 8.8 and 45 degrees Celsius)</KM>
        <Vmax evidence="2 5">12.0 pmol/min/mg enzyme for the reverse reaction reducing sepapterin (at 37 degrees Celsius)</Vmax>
        <text evidence="2">For the reverse reaction, accepts L-threo-dihydrobiopterin, D-threo-dihydrobiopterin, L-threo-dihydroneopterin, dihydrotepidopterin and L-erythro-dihydrobiopterin as substrates.</text>
    </kinetics>
    <phDependence>
        <text evidence="2 5">Optimum pH is around 8.8. Activity drops sharply above and below the optimum and is absent at pH 3 and virtually so at pH 10.6.</text>
    </phDependence>
    <temperatureDependence>
        <text evidence="2 5">Optimum temperature is 50 degrees Celsius. Stable at 25 and 50 degrees Celsius for 2 h but loses activity at 70 degrees Celsius in 20 minutes.</text>
    </temperatureDependence>
</comment>
<comment type="subunit">
    <text evidence="2 4 5">Homodimer.</text>
</comment>
<comment type="subcellular location">
    <subcellularLocation>
        <location evidence="2">Cytoplasm</location>
    </subcellularLocation>
</comment>
<comment type="similarity">
    <text evidence="1">Belongs to the short-chain dehydrogenases/reductases (SDR) family.</text>
</comment>
<reference evidence="8" key="1">
    <citation type="journal article" date="2002" name="Proc. Natl. Acad. Sci. U.S.A.">
        <title>The complete genome sequence of Chlorobium tepidum TLS, a photosynthetic, anaerobic, green-sulfur bacterium.</title>
        <authorList>
            <person name="Eisen J.A."/>
            <person name="Nelson K.E."/>
            <person name="Paulsen I.T."/>
            <person name="Heidelberg J.F."/>
            <person name="Wu M."/>
            <person name="Dodson R.J."/>
            <person name="DeBoy R.T."/>
            <person name="Gwinn M.L."/>
            <person name="Nelson W.C."/>
            <person name="Haft D.H."/>
            <person name="Hickey E.K."/>
            <person name="Peterson J.D."/>
            <person name="Durkin A.S."/>
            <person name="Kolonay J.F."/>
            <person name="Yang F."/>
            <person name="Holt I.E."/>
            <person name="Umayam L.A."/>
            <person name="Mason T.M."/>
            <person name="Brenner M."/>
            <person name="Shea T.P."/>
            <person name="Parksey D.S."/>
            <person name="Nierman W.C."/>
            <person name="Feldblyum T.V."/>
            <person name="Hansen C.L."/>
            <person name="Craven M.B."/>
            <person name="Radune D."/>
            <person name="Vamathevan J.J."/>
            <person name="Khouri H.M."/>
            <person name="White O."/>
            <person name="Gruber T.M."/>
            <person name="Ketchum K.A."/>
            <person name="Venter J.C."/>
            <person name="Tettelin H."/>
            <person name="Bryant D.A."/>
            <person name="Fraser C.M."/>
        </authorList>
    </citation>
    <scope>NUCLEOTIDE SEQUENCE [LARGE SCALE GENOMIC DNA]</scope>
    <source>
        <strain>ATCC 49652 / DSM 12025 / NBRC 103806 / TLS</strain>
    </source>
</reference>
<reference evidence="7" key="2">
    <citation type="journal article" date="1999" name="Biochem. J.">
        <title>Sepiapterin reductase producing L-threo-dihydrobiopterin from Chlorobium tepidum.</title>
        <authorList>
            <person name="Cho S.H."/>
            <person name="Na J.U."/>
            <person name="Youn H."/>
            <person name="Hwang C.S."/>
            <person name="Lee C.H."/>
            <person name="Kang S.O."/>
        </authorList>
    </citation>
    <scope>PROTEIN SEQUENCE OF 1-30</scope>
    <scope>FUNCTION</scope>
    <scope>CATALYTIC ACTIVITY</scope>
    <scope>ACTIVITY REGULATION</scope>
    <scope>BIOPHYSICOCHEMICAL PROPERTIES</scope>
    <scope>SUBCELLULAR LOCATION</scope>
    <scope>SUBUNIT</scope>
</reference>
<reference evidence="7" key="3">
    <citation type="journal article" date="2005" name="FEMS Microbiol. Lett.">
        <title>Sepiapterin reductases from Chlorobium tepidum and Chlorobium limicola catalyze the synthesis of L-threo-tetrahydrobiopterin from 6-pyruvoyltetrahydropterin.</title>
        <authorList>
            <person name="Choi Y.K."/>
            <person name="Jun S.R."/>
            <person name="Cha E.Y."/>
            <person name="Park J.S."/>
            <person name="Park Y.S."/>
        </authorList>
    </citation>
    <scope>FUNCTION</scope>
    <scope>CATALYTIC ACTIVITY</scope>
</reference>
<reference evidence="7" key="4">
    <citation type="journal article" date="2008" name="Acta Biochim. Biophys. Sin.">
        <title>Role of Phe-99 and Trp-196 of sepiapterin reductase from Chlorobium tepidum in the production of L-threo-tetrahydrobiopterin.</title>
        <authorList>
            <person name="Supangat S."/>
            <person name="Park S.O."/>
            <person name="Seo K.H."/>
            <person name="Lee S.Y."/>
            <person name="Park Y.S."/>
            <person name="Lee K.H."/>
        </authorList>
    </citation>
    <scope>BIOPHYSICOCHEMICAL PROPERTIES</scope>
    <scope>FUNCTION</scope>
    <scope>CATALYTIC ACTIVITY</scope>
    <scope>SUBUNIT</scope>
    <scope>MUTAGENESIS OF PHE-99 AND TRP-196</scope>
</reference>
<reference evidence="7 9" key="5">
    <citation type="journal article" date="2006" name="J. Biol. Chem.">
        <title>Structure of Chlorobium tepidum sepiapterin reductase complex reveals the novel substrate binding mode for stereospecific production of L-threo-tetrahydrobiopterin.</title>
        <authorList>
            <person name="Supangat S."/>
            <person name="Seo K.H."/>
            <person name="Choi Y.K."/>
            <person name="Park Y.S."/>
            <person name="Son D."/>
            <person name="Han C.D."/>
            <person name="Lee K.H."/>
        </authorList>
    </citation>
    <scope>X-RAY CRYSTALLOGRAPHY (1.70 ANGSTROMS) OF APOPROTEIN AND IN COMPLEX WITH BIOPTERIN AND NADP</scope>
    <scope>SUBUNIT</scope>
</reference>
<accession>Q8KES3</accession>
<organism>
    <name type="scientific">Chlorobaculum tepidum (strain ATCC 49652 / DSM 12025 / NBRC 103806 / TLS)</name>
    <name type="common">Chlorobium tepidum</name>
    <dbReference type="NCBI Taxonomy" id="194439"/>
    <lineage>
        <taxon>Bacteria</taxon>
        <taxon>Pseudomonadati</taxon>
        <taxon>Chlorobiota</taxon>
        <taxon>Chlorobiia</taxon>
        <taxon>Chlorobiales</taxon>
        <taxon>Chlorobiaceae</taxon>
        <taxon>Chlorobaculum</taxon>
    </lineage>
</organism>
<evidence type="ECO:0000250" key="1">
    <source>
        <dbReference type="UniProtKB" id="Q64105"/>
    </source>
</evidence>
<evidence type="ECO:0000269" key="2">
    <source>
    </source>
</evidence>
<evidence type="ECO:0000269" key="3">
    <source>
    </source>
</evidence>
<evidence type="ECO:0000269" key="4">
    <source>
    </source>
</evidence>
<evidence type="ECO:0000269" key="5">
    <source>
    </source>
</evidence>
<evidence type="ECO:0000303" key="6">
    <source>
    </source>
</evidence>
<evidence type="ECO:0000305" key="7"/>
<evidence type="ECO:0000312" key="8">
    <source>
        <dbReference type="EMBL" id="AAM71851.1"/>
    </source>
</evidence>
<evidence type="ECO:0000312" key="9">
    <source>
        <dbReference type="PDB" id="2BD0"/>
    </source>
</evidence>
<evidence type="ECO:0007829" key="10">
    <source>
        <dbReference type="PDB" id="2BD0"/>
    </source>
</evidence>
<protein>
    <recommendedName>
        <fullName evidence="8">Sepiapterin reductase</fullName>
        <shortName evidence="1">SPR</shortName>
        <shortName evidence="6">cSR</shortName>
        <ecNumber evidence="2 3">1.1.1.325</ecNumber>
    </recommendedName>
</protein>
<name>SPRE_CHLTE</name>
<keyword id="KW-0002">3D-structure</keyword>
<keyword id="KW-0963">Cytoplasm</keyword>
<keyword id="KW-0903">Direct protein sequencing</keyword>
<keyword id="KW-0521">NADP</keyword>
<keyword id="KW-0547">Nucleotide-binding</keyword>
<keyword id="KW-0560">Oxidoreductase</keyword>
<keyword id="KW-1185">Reference proteome</keyword>
<dbReference type="EC" id="1.1.1.325" evidence="2 3"/>
<dbReference type="EMBL" id="AE006470">
    <property type="protein sequence ID" value="AAM71851.1"/>
    <property type="molecule type" value="Genomic_DNA"/>
</dbReference>
<dbReference type="RefSeq" id="NP_661509.1">
    <property type="nucleotide sequence ID" value="NC_002932.3"/>
</dbReference>
<dbReference type="RefSeq" id="WP_010932296.1">
    <property type="nucleotide sequence ID" value="NC_002932.3"/>
</dbReference>
<dbReference type="PDB" id="2BD0">
    <property type="method" value="X-ray"/>
    <property type="resolution" value="1.70 A"/>
    <property type="chains" value="A/B/C/D=1-244"/>
</dbReference>
<dbReference type="PDBsum" id="2BD0"/>
<dbReference type="SMR" id="Q8KES3"/>
<dbReference type="STRING" id="194439.CT0609"/>
<dbReference type="EnsemblBacteria" id="AAM71851">
    <property type="protein sequence ID" value="AAM71851"/>
    <property type="gene ID" value="CT0609"/>
</dbReference>
<dbReference type="KEGG" id="cte:CT0609"/>
<dbReference type="PATRIC" id="fig|194439.7.peg.566"/>
<dbReference type="eggNOG" id="COG4221">
    <property type="taxonomic scope" value="Bacteria"/>
</dbReference>
<dbReference type="HOGENOM" id="CLU_010194_2_10_10"/>
<dbReference type="OrthoDB" id="9810734at2"/>
<dbReference type="BioCyc" id="MetaCyc:MONOMER-13404"/>
<dbReference type="EvolutionaryTrace" id="Q8KES3"/>
<dbReference type="Proteomes" id="UP000001007">
    <property type="component" value="Chromosome"/>
</dbReference>
<dbReference type="GO" id="GO:0005737">
    <property type="term" value="C:cytoplasm"/>
    <property type="evidence" value="ECO:0007669"/>
    <property type="project" value="UniProtKB-SubCell"/>
</dbReference>
<dbReference type="GO" id="GO:0000166">
    <property type="term" value="F:nucleotide binding"/>
    <property type="evidence" value="ECO:0007669"/>
    <property type="project" value="UniProtKB-KW"/>
</dbReference>
<dbReference type="GO" id="GO:0016491">
    <property type="term" value="F:oxidoreductase activity"/>
    <property type="evidence" value="ECO:0007669"/>
    <property type="project" value="UniProtKB-KW"/>
</dbReference>
<dbReference type="CDD" id="cd05233">
    <property type="entry name" value="SDR_c"/>
    <property type="match status" value="1"/>
</dbReference>
<dbReference type="Gene3D" id="3.40.50.720">
    <property type="entry name" value="NAD(P)-binding Rossmann-like Domain"/>
    <property type="match status" value="1"/>
</dbReference>
<dbReference type="InterPro" id="IPR036291">
    <property type="entry name" value="NAD(P)-bd_dom_sf"/>
</dbReference>
<dbReference type="InterPro" id="IPR002347">
    <property type="entry name" value="SDR_fam"/>
</dbReference>
<dbReference type="PANTHER" id="PTHR43391:SF14">
    <property type="entry name" value="DEHYDROGENASE_REDUCTASE SDR FAMILY PROTEIN 7-LIKE"/>
    <property type="match status" value="1"/>
</dbReference>
<dbReference type="PANTHER" id="PTHR43391">
    <property type="entry name" value="RETINOL DEHYDROGENASE-RELATED"/>
    <property type="match status" value="1"/>
</dbReference>
<dbReference type="Pfam" id="PF00106">
    <property type="entry name" value="adh_short"/>
    <property type="match status" value="1"/>
</dbReference>
<dbReference type="PRINTS" id="PR00081">
    <property type="entry name" value="GDHRDH"/>
</dbReference>
<dbReference type="PRINTS" id="PR00080">
    <property type="entry name" value="SDRFAMILY"/>
</dbReference>
<dbReference type="SMART" id="SM00822">
    <property type="entry name" value="PKS_KR"/>
    <property type="match status" value="1"/>
</dbReference>
<dbReference type="SUPFAM" id="SSF51735">
    <property type="entry name" value="NAD(P)-binding Rossmann-fold domains"/>
    <property type="match status" value="1"/>
</dbReference>
<proteinExistence type="evidence at protein level"/>
<sequence>MKHILLITGAGKGIGRAIALEFARAARHHPDFEPVLVLSSRTAADLEKISLECRAEGALTDTITADISDMADVRRLTTHIVERYGHIDCLVNNAGVGRFGALSDLTEEDFDYTMNTNLKGTFFLTQALFALMERQHSGHIFFITSVAATKAFRHSSIYCMSKFGQRGLVETMRLYARKCNVRITDVQPGAVYTPMWGKVDDEMQALMMMPEDIAAPVVQAYLQPSRTVVEEIILRPTSGDIQDD</sequence>
<feature type="chain" id="PRO_0000424153" description="Sepiapterin reductase">
    <location>
        <begin position="1"/>
        <end position="244"/>
    </location>
</feature>
<feature type="binding site" evidence="4">
    <location>
        <begin position="9"/>
        <end position="15"/>
    </location>
    <ligand>
        <name>NADP(+)</name>
        <dbReference type="ChEBI" id="CHEBI:58349"/>
    </ligand>
</feature>
<feature type="binding site" evidence="4">
    <location>
        <begin position="40"/>
        <end position="42"/>
    </location>
    <ligand>
        <name>NADP(+)</name>
        <dbReference type="ChEBI" id="CHEBI:58349"/>
    </ligand>
</feature>
<feature type="binding site" evidence="4">
    <location>
        <begin position="66"/>
        <end position="67"/>
    </location>
    <ligand>
        <name>NADP(+)</name>
        <dbReference type="ChEBI" id="CHEBI:58349"/>
    </ligand>
</feature>
<feature type="binding site" evidence="4">
    <location>
        <position position="93"/>
    </location>
    <ligand>
        <name>NADP(+)</name>
        <dbReference type="ChEBI" id="CHEBI:58349"/>
    </ligand>
</feature>
<feature type="binding site" evidence="4">
    <location>
        <position position="99"/>
    </location>
    <ligand>
        <name>substrate</name>
    </ligand>
</feature>
<feature type="binding site" evidence="4">
    <location>
        <position position="116"/>
    </location>
    <ligand>
        <name>NADP(+)</name>
        <dbReference type="ChEBI" id="CHEBI:58349"/>
    </ligand>
</feature>
<feature type="binding site" evidence="4">
    <location>
        <position position="145"/>
    </location>
    <ligand>
        <name>substrate</name>
    </ligand>
</feature>
<feature type="binding site" evidence="4">
    <location>
        <position position="158"/>
    </location>
    <ligand>
        <name>NADP(+)</name>
        <dbReference type="ChEBI" id="CHEBI:58349"/>
    </ligand>
</feature>
<feature type="binding site" evidence="4">
    <location>
        <position position="158"/>
    </location>
    <ligand>
        <name>substrate</name>
    </ligand>
</feature>
<feature type="binding site" evidence="4">
    <location>
        <position position="162"/>
    </location>
    <ligand>
        <name>NADP(+)</name>
        <dbReference type="ChEBI" id="CHEBI:58349"/>
    </ligand>
</feature>
<feature type="binding site" evidence="4">
    <location>
        <begin position="191"/>
        <end position="196"/>
    </location>
    <ligand>
        <name>NADP(+)</name>
        <dbReference type="ChEBI" id="CHEBI:58349"/>
    </ligand>
</feature>
<feature type="binding site" evidence="4">
    <location>
        <position position="196"/>
    </location>
    <ligand>
        <name>substrate</name>
    </ligand>
</feature>
<feature type="mutagenesis site" description="Drastically reduces activity. Complete loss of activity; when associated with A-196." evidence="5">
    <original>F</original>
    <variation>A</variation>
    <location>
        <position position="99"/>
    </location>
</feature>
<feature type="mutagenesis site" description="Drastically reduces activity. Complete loss of activity; when associated with A-99." evidence="5">
    <original>W</original>
    <variation>A</variation>
    <location>
        <position position="196"/>
    </location>
</feature>
<feature type="strand" evidence="10">
    <location>
        <begin position="3"/>
        <end position="8"/>
    </location>
</feature>
<feature type="turn" evidence="10">
    <location>
        <begin position="9"/>
        <end position="11"/>
    </location>
</feature>
<feature type="helix" evidence="10">
    <location>
        <begin position="13"/>
        <end position="25"/>
    </location>
</feature>
<feature type="turn" evidence="10">
    <location>
        <begin position="26"/>
        <end position="28"/>
    </location>
</feature>
<feature type="strand" evidence="10">
    <location>
        <begin position="34"/>
        <end position="41"/>
    </location>
</feature>
<feature type="helix" evidence="10">
    <location>
        <begin position="43"/>
        <end position="54"/>
    </location>
</feature>
<feature type="turn" evidence="10">
    <location>
        <begin position="55"/>
        <end position="57"/>
    </location>
</feature>
<feature type="strand" evidence="10">
    <location>
        <begin position="59"/>
        <end position="64"/>
    </location>
</feature>
<feature type="helix" evidence="10">
    <location>
        <begin position="70"/>
        <end position="83"/>
    </location>
</feature>
<feature type="strand" evidence="10">
    <location>
        <begin position="88"/>
        <end position="92"/>
    </location>
</feature>
<feature type="helix" evidence="10">
    <location>
        <begin position="102"/>
        <end position="104"/>
    </location>
</feature>
<feature type="helix" evidence="10">
    <location>
        <begin position="107"/>
        <end position="117"/>
    </location>
</feature>
<feature type="helix" evidence="10">
    <location>
        <begin position="119"/>
        <end position="135"/>
    </location>
</feature>
<feature type="strand" evidence="10">
    <location>
        <begin position="138"/>
        <end position="143"/>
    </location>
</feature>
<feature type="helix" evidence="10">
    <location>
        <begin position="146"/>
        <end position="148"/>
    </location>
</feature>
<feature type="helix" evidence="10">
    <location>
        <begin position="156"/>
        <end position="176"/>
    </location>
</feature>
<feature type="turn" evidence="10">
    <location>
        <begin position="177"/>
        <end position="180"/>
    </location>
</feature>
<feature type="strand" evidence="10">
    <location>
        <begin position="181"/>
        <end position="188"/>
    </location>
</feature>
<feature type="turn" evidence="10">
    <location>
        <begin position="194"/>
        <end position="196"/>
    </location>
</feature>
<feature type="helix" evidence="10">
    <location>
        <begin position="204"/>
        <end position="206"/>
    </location>
</feature>
<feature type="helix" evidence="10">
    <location>
        <begin position="210"/>
        <end position="221"/>
    </location>
</feature>
<feature type="strand" evidence="10">
    <location>
        <begin position="227"/>
        <end position="236"/>
    </location>
</feature>